<protein>
    <recommendedName>
        <fullName>Transcription factor 12</fullName>
        <shortName>TCF-12</shortName>
    </recommendedName>
    <alternativeName>
        <fullName>Class A helix-loop-helix transcription factor GE1</fullName>
    </alternativeName>
    <alternativeName>
        <fullName>E-box-binding protein</fullName>
    </alternativeName>
    <alternativeName>
        <fullName>Transcription factor HTF-4</fullName>
    </alternativeName>
</protein>
<keyword id="KW-0217">Developmental protein</keyword>
<keyword id="KW-0238">DNA-binding</keyword>
<keyword id="KW-0539">Nucleus</keyword>
<keyword id="KW-1185">Reference proteome</keyword>
<keyword id="KW-0804">Transcription</keyword>
<keyword id="KW-0805">Transcription regulation</keyword>
<proteinExistence type="evidence at transcript level"/>
<evidence type="ECO:0000250" key="1"/>
<evidence type="ECO:0000250" key="2">
    <source>
        <dbReference type="UniProtKB" id="Q61286"/>
    </source>
</evidence>
<evidence type="ECO:0000255" key="3"/>
<evidence type="ECO:0000255" key="4">
    <source>
        <dbReference type="PROSITE-ProRule" id="PRU00981"/>
    </source>
</evidence>
<evidence type="ECO:0000256" key="5">
    <source>
        <dbReference type="SAM" id="MobiDB-lite"/>
    </source>
</evidence>
<evidence type="ECO:0000305" key="6"/>
<organism>
    <name type="scientific">Gallus gallus</name>
    <name type="common">Chicken</name>
    <dbReference type="NCBI Taxonomy" id="9031"/>
    <lineage>
        <taxon>Eukaryota</taxon>
        <taxon>Metazoa</taxon>
        <taxon>Chordata</taxon>
        <taxon>Craniata</taxon>
        <taxon>Vertebrata</taxon>
        <taxon>Euteleostomi</taxon>
        <taxon>Archelosauria</taxon>
        <taxon>Archosauria</taxon>
        <taxon>Dinosauria</taxon>
        <taxon>Saurischia</taxon>
        <taxon>Theropoda</taxon>
        <taxon>Coelurosauria</taxon>
        <taxon>Aves</taxon>
        <taxon>Neognathae</taxon>
        <taxon>Galloanserae</taxon>
        <taxon>Galliformes</taxon>
        <taxon>Phasianidae</taxon>
        <taxon>Phasianinae</taxon>
        <taxon>Gallus</taxon>
    </lineage>
</organism>
<sequence length="657" mass="70542">MDEKGGTTSWGTSGQPSPSYDSRGFTDSPHYSDHLNDSRKGTHEGLSPTPFSNSNLIGKTSGRGSFSLYSRDSGLSGCQSSLLRQELGLGSPAQLSSSGKPETPYYSFSATSSRRRPKHDSVALDPLQAKKVRKVPGLPSSVYRPSPNSDDFNRESPSYPSPKPPTSMFASTFFMQDGTHSSSDLWSSSNGMSQPGFGGILGTSTSHMSQSGSYGSLHSHDRLSYPPHSVSPTDINTSLPPMSSFHRGSTSSSPYVAASHTPPVNGSDSIVGTKGNGAGGSQTGDALGKALASIYSPDHTSSSFPSNPSTPVGSPSPLTGASQWSRSGGQAPSSPNYENSLHSLKNRVEQQLHEHLQDAMSFLKDVCEQSRMEDRLDRLDDAIHVLRNHAVGPSTSLSGGHGDIHSLLGPSHNGPIGSLNSSYGASSLVAANRQASMVAAHREESVSLNSNHAVLPSTVSAQSTELNHKTQESYRALSGGLQSQSVAIGPTEIKSEHKEKDENIHEPPSSDDMKSDDESSQKDIKVSSRGRTSSTNEDEDLNPEQKIEREKERRMANNARERLRVRDINEAFKELGRMCQLHLKSEKPQTKLLILHQAVAVILSLEQQVRERNLNPKAACLKRREEEKVSAVSAEPPTPHPGSHPGLSETTNPMGHM</sequence>
<feature type="chain" id="PRO_0000127234" description="Transcription factor 12">
    <location>
        <begin position="1" status="less than"/>
        <end position="657"/>
    </location>
</feature>
<feature type="domain" description="bHLH" evidence="4">
    <location>
        <begin position="552"/>
        <end position="605"/>
    </location>
</feature>
<feature type="region of interest" description="Disordered" evidence="5">
    <location>
        <begin position="1"/>
        <end position="76"/>
    </location>
</feature>
<feature type="region of interest" description="Leucine-zipper">
    <location>
        <begin position="68"/>
        <end position="89"/>
    </location>
</feature>
<feature type="region of interest" description="Disordered" evidence="5">
    <location>
        <begin position="89"/>
        <end position="285"/>
    </location>
</feature>
<feature type="region of interest" description="Disordered" evidence="5">
    <location>
        <begin position="297"/>
        <end position="340"/>
    </location>
</feature>
<feature type="region of interest" description="Disordered" evidence="5">
    <location>
        <begin position="459"/>
        <end position="555"/>
    </location>
</feature>
<feature type="region of interest" description="Class A specific domain">
    <location>
        <begin position="607"/>
        <end position="630"/>
    </location>
</feature>
<feature type="region of interest" description="Disordered" evidence="5">
    <location>
        <begin position="628"/>
        <end position="657"/>
    </location>
</feature>
<feature type="short sequence motif" description="Nuclear localization signal" evidence="3">
    <location>
        <begin position="130"/>
        <end position="136"/>
    </location>
</feature>
<feature type="compositionally biased region" description="Polar residues" evidence="5">
    <location>
        <begin position="1"/>
        <end position="20"/>
    </location>
</feature>
<feature type="compositionally biased region" description="Basic and acidic residues" evidence="5">
    <location>
        <begin position="30"/>
        <end position="43"/>
    </location>
</feature>
<feature type="compositionally biased region" description="Polar residues" evidence="5">
    <location>
        <begin position="49"/>
        <end position="70"/>
    </location>
</feature>
<feature type="compositionally biased region" description="Polar residues" evidence="5">
    <location>
        <begin position="93"/>
        <end position="112"/>
    </location>
</feature>
<feature type="compositionally biased region" description="Polar residues" evidence="5">
    <location>
        <begin position="168"/>
        <end position="193"/>
    </location>
</feature>
<feature type="compositionally biased region" description="Polar residues" evidence="5">
    <location>
        <begin position="202"/>
        <end position="216"/>
    </location>
</feature>
<feature type="compositionally biased region" description="Polar residues" evidence="5">
    <location>
        <begin position="230"/>
        <end position="254"/>
    </location>
</feature>
<feature type="compositionally biased region" description="Low complexity" evidence="5">
    <location>
        <begin position="300"/>
        <end position="311"/>
    </location>
</feature>
<feature type="compositionally biased region" description="Polar residues" evidence="5">
    <location>
        <begin position="312"/>
        <end position="340"/>
    </location>
</feature>
<feature type="compositionally biased region" description="Basic and acidic residues" evidence="5">
    <location>
        <begin position="493"/>
        <end position="505"/>
    </location>
</feature>
<feature type="compositionally biased region" description="Basic and acidic residues" evidence="5">
    <location>
        <begin position="511"/>
        <end position="526"/>
    </location>
</feature>
<feature type="compositionally biased region" description="Basic and acidic residues" evidence="5">
    <location>
        <begin position="543"/>
        <end position="555"/>
    </location>
</feature>
<feature type="compositionally biased region" description="Polar residues" evidence="5">
    <location>
        <begin position="648"/>
        <end position="657"/>
    </location>
</feature>
<feature type="sequence conflict" description="In Ref. 2." evidence="6" ref="2">
    <original>T</original>
    <variation>S</variation>
    <location>
        <position position="166"/>
    </location>
</feature>
<feature type="sequence conflict" description="In Ref. 1." evidence="6" ref="1">
    <location>
        <position position="170"/>
    </location>
</feature>
<feature type="sequence conflict" description="In Ref. 1." evidence="6" ref="1">
    <original>F</original>
    <variation>P</variation>
    <location>
        <position position="174"/>
    </location>
</feature>
<feature type="sequence conflict" description="In Ref. 2; AAA85801." evidence="6" ref="2">
    <original>S</original>
    <variation>N</variation>
    <location>
        <position position="181"/>
    </location>
</feature>
<feature type="sequence conflict" description="In Ref. 1." evidence="6" ref="1">
    <original>S</original>
    <variation>M</variation>
    <location>
        <position position="189"/>
    </location>
</feature>
<feature type="sequence conflict" description="In Ref. 2; AAA85801." evidence="6" ref="2">
    <original>F</original>
    <variation>Y</variation>
    <location>
        <position position="197"/>
    </location>
</feature>
<feature type="sequence conflict" description="In Ref. 2; AAA85801." evidence="6" ref="2">
    <original>I</original>
    <variation>M</variation>
    <location>
        <position position="200"/>
    </location>
</feature>
<feature type="sequence conflict" description="In Ref. 2; AAA85801." evidence="6" ref="2">
    <original>TST</original>
    <variation>GSS</variation>
    <location>
        <begin position="203"/>
        <end position="205"/>
    </location>
</feature>
<feature type="sequence conflict" description="In Ref. 1." evidence="6" ref="1">
    <original>SG</original>
    <variation>YS</variation>
    <location>
        <begin position="211"/>
        <end position="212"/>
    </location>
</feature>
<feature type="sequence conflict" description="In Ref. 2; AAA85801." evidence="6" ref="2">
    <original>S</original>
    <variation>T</variation>
    <location>
        <position position="219"/>
    </location>
</feature>
<feature type="sequence conflict" description="In Ref. 1." evidence="6" ref="1">
    <original>V</original>
    <variation>L</variation>
    <location>
        <position position="230"/>
    </location>
</feature>
<feature type="sequence conflict" description="In Ref. 2; AAA85801." evidence="6" ref="2">
    <original>T</original>
    <variation>A</variation>
    <location>
        <position position="237"/>
    </location>
</feature>
<feature type="sequence conflict" description="In Ref. 1." evidence="6" ref="1">
    <original>R</original>
    <variation>K</variation>
    <location>
        <position position="247"/>
    </location>
</feature>
<feature type="sequence conflict" description="In Ref. 1." evidence="6" ref="1">
    <original>V</original>
    <variation>L</variation>
    <location>
        <position position="256"/>
    </location>
</feature>
<feature type="sequence conflict" description="In Ref. 1." evidence="6" ref="1">
    <location>
        <position position="261"/>
    </location>
</feature>
<feature type="sequence conflict" description="In Ref. 1." evidence="6" ref="1">
    <original>V</original>
    <variation>I</variation>
    <location>
        <position position="264"/>
    </location>
</feature>
<feature type="sequence conflict" description="In Ref. 2 and 3." evidence="6" ref="2 3">
    <original>DSIVGTK</original>
    <variation>ENILGNR</variation>
    <location>
        <begin position="268"/>
        <end position="274"/>
    </location>
</feature>
<feature type="sequence conflict" description="In Ref. 1." evidence="6" ref="1">
    <original>K</original>
    <variation>R</variation>
    <location>
        <position position="289"/>
    </location>
</feature>
<feature type="sequence conflict" description="In Ref. 1." evidence="6" ref="1">
    <original>N</original>
    <variation>S</variation>
    <location>
        <position position="336"/>
    </location>
</feature>
<feature type="sequence conflict" description="In Ref. 1; M97634." evidence="6" ref="1">
    <original>GP</original>
    <variation>A</variation>
    <location>
        <begin position="392"/>
        <end position="393"/>
    </location>
</feature>
<feature type="sequence conflict" description="In Ref. 1." evidence="6" ref="1">
    <original>SY</original>
    <variation>NS</variation>
    <location>
        <begin position="422"/>
        <end position="423"/>
    </location>
</feature>
<feature type="sequence conflict" description="In Ref. 1." evidence="6" ref="1">
    <original>P</original>
    <variation>S</variation>
    <location>
        <position position="456"/>
    </location>
</feature>
<feature type="sequence conflict" description="In Ref. 3; CAA45573/AAA49088." evidence="6" ref="3">
    <original>S</original>
    <variation>T</variation>
    <location>
        <position position="463"/>
    </location>
</feature>
<feature type="sequence conflict" description="In Ref. 1." evidence="6" ref="1">
    <original>YRALS</original>
    <variation>FR</variation>
    <location>
        <begin position="474"/>
        <end position="478"/>
    </location>
</feature>
<feature type="sequence conflict" description="In Ref. 1." evidence="6" ref="1">
    <original>VAIG</original>
    <variation>GSFV</variation>
    <location>
        <begin position="486"/>
        <end position="489"/>
    </location>
</feature>
<feature type="sequence conflict" description="In Ref. 1." evidence="6" ref="1">
    <original>TPH</original>
    <variation>STL</variation>
    <location>
        <begin position="638"/>
        <end position="640"/>
    </location>
</feature>
<feature type="non-terminal residue">
    <location>
        <position position="1"/>
    </location>
</feature>
<accession>P30985</accession>
<accession>Q90622</accession>
<accession>Q9PSH1</accession>
<name>HTF4_CHICK</name>
<comment type="function">
    <text evidence="2">Transcriptional regulator. Involved in the initiation of neuronal differentiation. Activates transcription by binding to the E box-containing promoter (By similarity).</text>
</comment>
<comment type="subunit">
    <text evidence="1">Efficient DNA binding requires dimerization with another bHLH protein. Forms homo- or heterooligomers with myogenin, E12 and ITF2 proteins (By similarity).</text>
</comment>
<comment type="subcellular location">
    <subcellularLocation>
        <location>Nucleus</location>
    </subcellularLocation>
</comment>
<comment type="developmental stage">
    <text>Abundantly expressed during development of the central nervous system, in particular in proliferating neuroblasts and in cells at the initial stages of differentiation. Also expressed at high levels in morphogenetically active regions such as limb buds, somites and mesonephric tubules. Expression decreases once cellular differentiation is over.</text>
</comment>
<comment type="sequence caution" evidence="6">
    <conflict type="frameshift">
        <sequence resource="EMBL-CDS" id="AAA49088"/>
    </conflict>
</comment>
<comment type="sequence caution" evidence="6">
    <conflict type="erroneous initiation">
        <sequence resource="EMBL-CDS" id="AAA85801"/>
    </conflict>
</comment>
<reference key="1">
    <citation type="journal article" date="1993" name="Eur. J. Neurosci.">
        <title>ME1 and GE1: basic helix-loop-helix transcription factors expressed at high levels in the developing nervous system and in morphogenetically active regions.</title>
        <authorList>
            <person name="Neuman T."/>
            <person name="Keen A."/>
            <person name="Knapik E."/>
            <person name="Shain D."/>
            <person name="Ross M."/>
            <person name="Nornes H.O."/>
            <person name="Zuber M.X."/>
        </authorList>
    </citation>
    <scope>NUCLEOTIDE SEQUENCE [MRNA]</scope>
    <source>
        <tissue>Neural tube</tissue>
    </source>
</reference>
<reference key="2">
    <citation type="journal article" date="1994" name="Mech. Dev.">
        <title>Cloning and analysis of a new developmentally regulated member of the basic helix-loop-helix family.</title>
        <authorList>
            <person name="Helms J.A."/>
            <person name="Kuratani S."/>
            <person name="Maxwell G.D."/>
        </authorList>
    </citation>
    <scope>NUCLEOTIDE SEQUENCE [MRNA] OF 153-657</scope>
    <source>
        <tissue>Embryonic brain</tissue>
    </source>
</reference>
<reference key="3">
    <citation type="journal article" date="1992" name="Nucleic Acids Res.">
        <title>CTF4, a chicken transcription factor of the helix-loop-helix class A family.</title>
        <authorList>
            <person name="Tsay H.J."/>
            <person name="Choe Y.H."/>
            <person name="Neville C.M."/>
            <person name="Schmidt J."/>
        </authorList>
    </citation>
    <scope>NUCLEOTIDE SEQUENCE [MRNA] OF 242-657</scope>
</reference>
<gene>
    <name type="primary">TCF12</name>
    <name type="synonym">CTF4</name>
</gene>
<dbReference type="EMBL" id="M97634">
    <property type="status" value="NOT_ANNOTATED_CDS"/>
    <property type="molecule type" value="mRNA"/>
</dbReference>
<dbReference type="EMBL" id="U12974">
    <property type="protein sequence ID" value="AAA85801.1"/>
    <property type="status" value="ALT_INIT"/>
    <property type="molecule type" value="mRNA"/>
</dbReference>
<dbReference type="EMBL" id="X64295">
    <property type="protein sequence ID" value="CAA45573.1"/>
    <property type="status" value="ALT_FRAME"/>
    <property type="molecule type" value="mRNA"/>
</dbReference>
<dbReference type="EMBL" id="M87337">
    <property type="protein sequence ID" value="AAA49088.1"/>
    <property type="status" value="ALT_FRAME"/>
    <property type="molecule type" value="mRNA"/>
</dbReference>
<dbReference type="RefSeq" id="NP_990706.2">
    <property type="nucleotide sequence ID" value="NM_205375.4"/>
</dbReference>
<dbReference type="FunCoup" id="P30985">
    <property type="interactions" value="2588"/>
</dbReference>
<dbReference type="STRING" id="9031.ENSGALP00000061552"/>
<dbReference type="GlyGen" id="P30985">
    <property type="glycosylation" value="2 sites"/>
</dbReference>
<dbReference type="GeneID" id="396334"/>
<dbReference type="KEGG" id="gga:396334"/>
<dbReference type="CTD" id="6938"/>
<dbReference type="VEuPathDB" id="HostDB:geneid_396334"/>
<dbReference type="InParanoid" id="P30985"/>
<dbReference type="OrthoDB" id="10034090at2759"/>
<dbReference type="PhylomeDB" id="P30985"/>
<dbReference type="Proteomes" id="UP000000539">
    <property type="component" value="Unassembled WGS sequence"/>
</dbReference>
<dbReference type="GO" id="GO:0000785">
    <property type="term" value="C:chromatin"/>
    <property type="evidence" value="ECO:0000318"/>
    <property type="project" value="GO_Central"/>
</dbReference>
<dbReference type="GO" id="GO:0005634">
    <property type="term" value="C:nucleus"/>
    <property type="evidence" value="ECO:0007669"/>
    <property type="project" value="UniProtKB-SubCell"/>
</dbReference>
<dbReference type="GO" id="GO:0005667">
    <property type="term" value="C:transcription regulator complex"/>
    <property type="evidence" value="ECO:0000318"/>
    <property type="project" value="GO_Central"/>
</dbReference>
<dbReference type="GO" id="GO:0000981">
    <property type="term" value="F:DNA-binding transcription factor activity, RNA polymerase II-specific"/>
    <property type="evidence" value="ECO:0000318"/>
    <property type="project" value="GO_Central"/>
</dbReference>
<dbReference type="GO" id="GO:0070888">
    <property type="term" value="F:E-box binding"/>
    <property type="evidence" value="ECO:0000250"/>
    <property type="project" value="UniProtKB"/>
</dbReference>
<dbReference type="GO" id="GO:0046982">
    <property type="term" value="F:protein heterodimerization activity"/>
    <property type="evidence" value="ECO:0000250"/>
    <property type="project" value="UniProtKB"/>
</dbReference>
<dbReference type="GO" id="GO:0000978">
    <property type="term" value="F:RNA polymerase II cis-regulatory region sequence-specific DNA binding"/>
    <property type="evidence" value="ECO:0000318"/>
    <property type="project" value="GO_Central"/>
</dbReference>
<dbReference type="GO" id="GO:0045666">
    <property type="term" value="P:positive regulation of neuron differentiation"/>
    <property type="evidence" value="ECO:0000250"/>
    <property type="project" value="UniProtKB"/>
</dbReference>
<dbReference type="GO" id="GO:0006357">
    <property type="term" value="P:regulation of transcription by RNA polymerase II"/>
    <property type="evidence" value="ECO:0000318"/>
    <property type="project" value="GO_Central"/>
</dbReference>
<dbReference type="CDD" id="cd18945">
    <property type="entry name" value="bHLH_E-protein_TCF4_E2-2"/>
    <property type="match status" value="1"/>
</dbReference>
<dbReference type="FunFam" id="4.10.280.10:FF:000001">
    <property type="entry name" value="Putative transcription factor 12"/>
    <property type="match status" value="1"/>
</dbReference>
<dbReference type="Gene3D" id="4.10.280.10">
    <property type="entry name" value="Helix-loop-helix DNA-binding domain"/>
    <property type="match status" value="1"/>
</dbReference>
<dbReference type="InterPro" id="IPR011598">
    <property type="entry name" value="bHLH_dom"/>
</dbReference>
<dbReference type="InterPro" id="IPR036638">
    <property type="entry name" value="HLH_DNA-bd_sf"/>
</dbReference>
<dbReference type="InterPro" id="IPR051098">
    <property type="entry name" value="NeuroDiff_E-box_TFs"/>
</dbReference>
<dbReference type="PANTHER" id="PTHR11793">
    <property type="entry name" value="BASIC HELIX-LOOP-HELIX TRANSCRIPTION FACTOR"/>
    <property type="match status" value="1"/>
</dbReference>
<dbReference type="PANTHER" id="PTHR11793:SF11">
    <property type="entry name" value="TRANSCRIPTION FACTOR 12"/>
    <property type="match status" value="1"/>
</dbReference>
<dbReference type="Pfam" id="PF00010">
    <property type="entry name" value="HLH"/>
    <property type="match status" value="1"/>
</dbReference>
<dbReference type="SMART" id="SM00353">
    <property type="entry name" value="HLH"/>
    <property type="match status" value="1"/>
</dbReference>
<dbReference type="SUPFAM" id="SSF47459">
    <property type="entry name" value="HLH, helix-loop-helix DNA-binding domain"/>
    <property type="match status" value="1"/>
</dbReference>
<dbReference type="PROSITE" id="PS50888">
    <property type="entry name" value="BHLH"/>
    <property type="match status" value="1"/>
</dbReference>